<gene>
    <name evidence="1" type="primary">tgt</name>
    <name type="ordered locus">FTM_1287</name>
</gene>
<keyword id="KW-0328">Glycosyltransferase</keyword>
<keyword id="KW-0479">Metal-binding</keyword>
<keyword id="KW-0671">Queuosine biosynthesis</keyword>
<keyword id="KW-0808">Transferase</keyword>
<keyword id="KW-0819">tRNA processing</keyword>
<keyword id="KW-0862">Zinc</keyword>
<protein>
    <recommendedName>
        <fullName evidence="1">Queuine tRNA-ribosyltransferase</fullName>
        <ecNumber evidence="1">2.4.2.29</ecNumber>
    </recommendedName>
    <alternativeName>
        <fullName evidence="1">Guanine insertion enzyme</fullName>
    </alternativeName>
    <alternativeName>
        <fullName evidence="1">tRNA-guanine transglycosylase</fullName>
    </alternativeName>
</protein>
<sequence>MTVMKFDLIKKEGKARRGKITFPRGDIQTPAFMPVGTYGAVKSLSPVELKEMGAEIILGNTFHLWLRPGTEIIKKHGSLHGFNGWDKPILTDSGGFQVFSLGKMRKLTEEGVTFKSPINSSKVFLSPEISMQVQRDLGSDIVMCFDECTPYPATEKEAKESMELSMRWAKRSKEAHGDNPSALFGIIQGGMYEHLRDESLAKLKEIDFDGFAIGGLSVGEPKEDMIRILDHTAHQMPEDKPRYLMGVGTPKDLVEAVYRGVDMFDCVMPSRNARNGHIFTSEGVIKIRNSKYKDDTSLLDPNCDCYTCKNFTKSYLHHLDKTKEILGSRLNTIHNLTFYQNLMKSIRKALDEGRFSEFRKEFLASYK</sequence>
<feature type="chain" id="PRO_1000097545" description="Queuine tRNA-ribosyltransferase">
    <location>
        <begin position="1"/>
        <end position="367"/>
    </location>
</feature>
<feature type="region of interest" description="RNA binding" evidence="1">
    <location>
        <begin position="246"/>
        <end position="252"/>
    </location>
</feature>
<feature type="active site" description="Proton acceptor" evidence="1">
    <location>
        <position position="92"/>
    </location>
</feature>
<feature type="active site" description="Nucleophile" evidence="1">
    <location>
        <position position="265"/>
    </location>
</feature>
<feature type="binding site" evidence="1">
    <location>
        <begin position="92"/>
        <end position="96"/>
    </location>
    <ligand>
        <name>substrate</name>
    </ligand>
</feature>
<feature type="binding site" evidence="1">
    <location>
        <position position="146"/>
    </location>
    <ligand>
        <name>substrate</name>
    </ligand>
</feature>
<feature type="binding site" evidence="1">
    <location>
        <position position="188"/>
    </location>
    <ligand>
        <name>substrate</name>
    </ligand>
</feature>
<feature type="binding site" evidence="1">
    <location>
        <position position="215"/>
    </location>
    <ligand>
        <name>substrate</name>
    </ligand>
</feature>
<feature type="binding site" evidence="1">
    <location>
        <position position="303"/>
    </location>
    <ligand>
        <name>Zn(2+)</name>
        <dbReference type="ChEBI" id="CHEBI:29105"/>
    </ligand>
</feature>
<feature type="binding site" evidence="1">
    <location>
        <position position="305"/>
    </location>
    <ligand>
        <name>Zn(2+)</name>
        <dbReference type="ChEBI" id="CHEBI:29105"/>
    </ligand>
</feature>
<feature type="binding site" evidence="1">
    <location>
        <position position="308"/>
    </location>
    <ligand>
        <name>Zn(2+)</name>
        <dbReference type="ChEBI" id="CHEBI:29105"/>
    </ligand>
</feature>
<feature type="binding site" evidence="1">
    <location>
        <position position="334"/>
    </location>
    <ligand>
        <name>Zn(2+)</name>
        <dbReference type="ChEBI" id="CHEBI:29105"/>
    </ligand>
</feature>
<organism>
    <name type="scientific">Francisella tularensis subsp. mediasiatica (strain FSC147)</name>
    <dbReference type="NCBI Taxonomy" id="441952"/>
    <lineage>
        <taxon>Bacteria</taxon>
        <taxon>Pseudomonadati</taxon>
        <taxon>Pseudomonadota</taxon>
        <taxon>Gammaproteobacteria</taxon>
        <taxon>Thiotrichales</taxon>
        <taxon>Francisellaceae</taxon>
        <taxon>Francisella</taxon>
    </lineage>
</organism>
<proteinExistence type="inferred from homology"/>
<evidence type="ECO:0000255" key="1">
    <source>
        <dbReference type="HAMAP-Rule" id="MF_00168"/>
    </source>
</evidence>
<comment type="function">
    <text evidence="1">Catalyzes the base-exchange of a guanine (G) residue with the queuine precursor 7-aminomethyl-7-deazaguanine (PreQ1) at position 34 (anticodon wobble position) in tRNAs with GU(N) anticodons (tRNA-Asp, -Asn, -His and -Tyr). Catalysis occurs through a double-displacement mechanism. The nucleophile active site attacks the C1' of nucleotide 34 to detach the guanine base from the RNA, forming a covalent enzyme-RNA intermediate. The proton acceptor active site deprotonates the incoming PreQ1, allowing a nucleophilic attack on the C1' of the ribose to form the product. After dissociation, two additional enzymatic reactions on the tRNA convert PreQ1 to queuine (Q), resulting in the hypermodified nucleoside queuosine (7-(((4,5-cis-dihydroxy-2-cyclopenten-1-yl)amino)methyl)-7-deazaguanosine).</text>
</comment>
<comment type="catalytic activity">
    <reaction evidence="1">
        <text>7-aminomethyl-7-carbaguanine + guanosine(34) in tRNA = 7-aminomethyl-7-carbaguanosine(34) in tRNA + guanine</text>
        <dbReference type="Rhea" id="RHEA:24104"/>
        <dbReference type="Rhea" id="RHEA-COMP:10341"/>
        <dbReference type="Rhea" id="RHEA-COMP:10342"/>
        <dbReference type="ChEBI" id="CHEBI:16235"/>
        <dbReference type="ChEBI" id="CHEBI:58703"/>
        <dbReference type="ChEBI" id="CHEBI:74269"/>
        <dbReference type="ChEBI" id="CHEBI:82833"/>
        <dbReference type="EC" id="2.4.2.29"/>
    </reaction>
</comment>
<comment type="cofactor">
    <cofactor evidence="1">
        <name>Zn(2+)</name>
        <dbReference type="ChEBI" id="CHEBI:29105"/>
    </cofactor>
    <text evidence="1">Binds 1 zinc ion per subunit.</text>
</comment>
<comment type="pathway">
    <text evidence="1">tRNA modification; tRNA-queuosine biosynthesis.</text>
</comment>
<comment type="subunit">
    <text evidence="1">Homodimer. Within each dimer, one monomer is responsible for RNA recognition and catalysis, while the other monomer binds to the replacement base PreQ1.</text>
</comment>
<comment type="similarity">
    <text evidence="1">Belongs to the queuine tRNA-ribosyltransferase family.</text>
</comment>
<name>TGT_FRATM</name>
<accession>B2SHD4</accession>
<dbReference type="EC" id="2.4.2.29" evidence="1"/>
<dbReference type="EMBL" id="CP000915">
    <property type="protein sequence ID" value="ACD31141.1"/>
    <property type="molecule type" value="Genomic_DNA"/>
</dbReference>
<dbReference type="SMR" id="B2SHD4"/>
<dbReference type="KEGG" id="ftm:FTM_1287"/>
<dbReference type="HOGENOM" id="CLU_022060_0_1_6"/>
<dbReference type="UniPathway" id="UPA00392"/>
<dbReference type="GO" id="GO:0005829">
    <property type="term" value="C:cytosol"/>
    <property type="evidence" value="ECO:0007669"/>
    <property type="project" value="TreeGrafter"/>
</dbReference>
<dbReference type="GO" id="GO:0046872">
    <property type="term" value="F:metal ion binding"/>
    <property type="evidence" value="ECO:0007669"/>
    <property type="project" value="UniProtKB-KW"/>
</dbReference>
<dbReference type="GO" id="GO:0008479">
    <property type="term" value="F:tRNA-guanosine(34) queuine transglycosylase activity"/>
    <property type="evidence" value="ECO:0007669"/>
    <property type="project" value="UniProtKB-UniRule"/>
</dbReference>
<dbReference type="GO" id="GO:0008616">
    <property type="term" value="P:queuosine biosynthetic process"/>
    <property type="evidence" value="ECO:0007669"/>
    <property type="project" value="UniProtKB-UniRule"/>
</dbReference>
<dbReference type="GO" id="GO:0002099">
    <property type="term" value="P:tRNA wobble guanine modification"/>
    <property type="evidence" value="ECO:0007669"/>
    <property type="project" value="TreeGrafter"/>
</dbReference>
<dbReference type="GO" id="GO:0101030">
    <property type="term" value="P:tRNA-guanine transglycosylation"/>
    <property type="evidence" value="ECO:0007669"/>
    <property type="project" value="InterPro"/>
</dbReference>
<dbReference type="FunFam" id="3.20.20.105:FF:000001">
    <property type="entry name" value="Queuine tRNA-ribosyltransferase"/>
    <property type="match status" value="1"/>
</dbReference>
<dbReference type="Gene3D" id="3.20.20.105">
    <property type="entry name" value="Queuine tRNA-ribosyltransferase-like"/>
    <property type="match status" value="1"/>
</dbReference>
<dbReference type="HAMAP" id="MF_00168">
    <property type="entry name" value="Q_tRNA_Tgt"/>
    <property type="match status" value="1"/>
</dbReference>
<dbReference type="InterPro" id="IPR050076">
    <property type="entry name" value="ArchSynthase1/Queuine_TRR"/>
</dbReference>
<dbReference type="InterPro" id="IPR004803">
    <property type="entry name" value="TGT"/>
</dbReference>
<dbReference type="InterPro" id="IPR036511">
    <property type="entry name" value="TGT-like_sf"/>
</dbReference>
<dbReference type="InterPro" id="IPR002616">
    <property type="entry name" value="tRNA_ribo_trans-like"/>
</dbReference>
<dbReference type="NCBIfam" id="TIGR00430">
    <property type="entry name" value="Q_tRNA_tgt"/>
    <property type="match status" value="1"/>
</dbReference>
<dbReference type="NCBIfam" id="TIGR00449">
    <property type="entry name" value="tgt_general"/>
    <property type="match status" value="1"/>
</dbReference>
<dbReference type="PANTHER" id="PTHR46499">
    <property type="entry name" value="QUEUINE TRNA-RIBOSYLTRANSFERASE"/>
    <property type="match status" value="1"/>
</dbReference>
<dbReference type="PANTHER" id="PTHR46499:SF1">
    <property type="entry name" value="QUEUINE TRNA-RIBOSYLTRANSFERASE"/>
    <property type="match status" value="1"/>
</dbReference>
<dbReference type="Pfam" id="PF01702">
    <property type="entry name" value="TGT"/>
    <property type="match status" value="1"/>
</dbReference>
<dbReference type="SUPFAM" id="SSF51713">
    <property type="entry name" value="tRNA-guanine transglycosylase"/>
    <property type="match status" value="1"/>
</dbReference>
<reference key="1">
    <citation type="journal article" date="2009" name="PLoS Pathog.">
        <title>Molecular evolutionary consequences of niche restriction in Francisella tularensis, a facultative intracellular pathogen.</title>
        <authorList>
            <person name="Larsson P."/>
            <person name="Elfsmark D."/>
            <person name="Svensson K."/>
            <person name="Wikstroem P."/>
            <person name="Forsman M."/>
            <person name="Brettin T."/>
            <person name="Keim P."/>
            <person name="Johansson A."/>
        </authorList>
    </citation>
    <scope>NUCLEOTIDE SEQUENCE [LARGE SCALE GENOMIC DNA]</scope>
    <source>
        <strain>FSC147</strain>
    </source>
</reference>